<evidence type="ECO:0000255" key="1">
    <source>
        <dbReference type="PROSITE-ProRule" id="PRU00159"/>
    </source>
</evidence>
<evidence type="ECO:0000255" key="2">
    <source>
        <dbReference type="PROSITE-ProRule" id="PRU10027"/>
    </source>
</evidence>
<evidence type="ECO:0000256" key="3">
    <source>
        <dbReference type="SAM" id="MobiDB-lite"/>
    </source>
</evidence>
<evidence type="ECO:0000305" key="4"/>
<protein>
    <recommendedName>
        <fullName>Serine/threonine-protein kinase PEPKR2</fullName>
        <ecNumber>2.7.11.-</ecNumber>
    </recommendedName>
    <alternativeName>
        <fullName>Protein PHOSPHOENOLPYRUVATE CARBOXYLASE-RELATED KINASE 2</fullName>
    </alternativeName>
</protein>
<organism>
    <name type="scientific">Arabidopsis thaliana</name>
    <name type="common">Mouse-ear cress</name>
    <dbReference type="NCBI Taxonomy" id="3702"/>
    <lineage>
        <taxon>Eukaryota</taxon>
        <taxon>Viridiplantae</taxon>
        <taxon>Streptophyta</taxon>
        <taxon>Embryophyta</taxon>
        <taxon>Tracheophyta</taxon>
        <taxon>Spermatophyta</taxon>
        <taxon>Magnoliopsida</taxon>
        <taxon>eudicotyledons</taxon>
        <taxon>Gunneridae</taxon>
        <taxon>Pentapetalae</taxon>
        <taxon>rosids</taxon>
        <taxon>malvids</taxon>
        <taxon>Brassicales</taxon>
        <taxon>Brassicaceae</taxon>
        <taxon>Camelineae</taxon>
        <taxon>Arabidopsis</taxon>
    </lineage>
</organism>
<keyword id="KW-0067">ATP-binding</keyword>
<keyword id="KW-0418">Kinase</keyword>
<keyword id="KW-0547">Nucleotide-binding</keyword>
<keyword id="KW-1185">Reference proteome</keyword>
<keyword id="KW-0723">Serine/threonine-protein kinase</keyword>
<keyword id="KW-0808">Transferase</keyword>
<sequence length="470" mass="52059">MRKKRKGSETEGWENLPDDLSCSTASRSSNFRSHFSLEGYARLKKRCKETEAVESVGSFKRRIAGVATAPPCGASSLVSSGRGLKRKIGCIDVSTQTGRKNKIDDDYVFGRNIGKGKFGSVRICKSRKNGTEFACKTLKKGEETVHREVEIMQHLSGHPRVVTLHAVYEESDCFHLVMELCSGGRLIDQMVKVGRYSEQRAANIFKDLMLVINYCHEMGVVHRDIKPENILLTAAGKIQLADFGLAMRIAKGQTLSGLAGSPAYVAPEVLSENYSEKVDVWSAGVLLYALLSGVLPFKGDSLDAIFEAIKNVKLDFNTGVWESVSKPARDLLARMLTREESARITADEVLRHPWILFYTDRTLKTMCIKSKHKSQAGSSTCLQNRSPTEKTDLNRADREKKIPSDSPTDSFSNTEEEEDESGVVDVLVVAIANVRISEPKRSRVCSPTNNPIEQQHSSNLTSTSTLCRAF</sequence>
<gene>
    <name type="primary">PEPKR2</name>
    <name type="ordered locus">At1g12680</name>
    <name type="ORF">T12C24.32</name>
</gene>
<accession>Q8W490</accession>
<accession>Q9LN78</accession>
<reference key="1">
    <citation type="journal article" date="2000" name="Nature">
        <title>Sequence and analysis of chromosome 1 of the plant Arabidopsis thaliana.</title>
        <authorList>
            <person name="Theologis A."/>
            <person name="Ecker J.R."/>
            <person name="Palm C.J."/>
            <person name="Federspiel N.A."/>
            <person name="Kaul S."/>
            <person name="White O."/>
            <person name="Alonso J."/>
            <person name="Altafi H."/>
            <person name="Araujo R."/>
            <person name="Bowman C.L."/>
            <person name="Brooks S.Y."/>
            <person name="Buehler E."/>
            <person name="Chan A."/>
            <person name="Chao Q."/>
            <person name="Chen H."/>
            <person name="Cheuk R.F."/>
            <person name="Chin C.W."/>
            <person name="Chung M.K."/>
            <person name="Conn L."/>
            <person name="Conway A.B."/>
            <person name="Conway A.R."/>
            <person name="Creasy T.H."/>
            <person name="Dewar K."/>
            <person name="Dunn P."/>
            <person name="Etgu P."/>
            <person name="Feldblyum T.V."/>
            <person name="Feng J.-D."/>
            <person name="Fong B."/>
            <person name="Fujii C.Y."/>
            <person name="Gill J.E."/>
            <person name="Goldsmith A.D."/>
            <person name="Haas B."/>
            <person name="Hansen N.F."/>
            <person name="Hughes B."/>
            <person name="Huizar L."/>
            <person name="Hunter J.L."/>
            <person name="Jenkins J."/>
            <person name="Johnson-Hopson C."/>
            <person name="Khan S."/>
            <person name="Khaykin E."/>
            <person name="Kim C.J."/>
            <person name="Koo H.L."/>
            <person name="Kremenetskaia I."/>
            <person name="Kurtz D.B."/>
            <person name="Kwan A."/>
            <person name="Lam B."/>
            <person name="Langin-Hooper S."/>
            <person name="Lee A."/>
            <person name="Lee J.M."/>
            <person name="Lenz C.A."/>
            <person name="Li J.H."/>
            <person name="Li Y.-P."/>
            <person name="Lin X."/>
            <person name="Liu S.X."/>
            <person name="Liu Z.A."/>
            <person name="Luros J.S."/>
            <person name="Maiti R."/>
            <person name="Marziali A."/>
            <person name="Militscher J."/>
            <person name="Miranda M."/>
            <person name="Nguyen M."/>
            <person name="Nierman W.C."/>
            <person name="Osborne B.I."/>
            <person name="Pai G."/>
            <person name="Peterson J."/>
            <person name="Pham P.K."/>
            <person name="Rizzo M."/>
            <person name="Rooney T."/>
            <person name="Rowley D."/>
            <person name="Sakano H."/>
            <person name="Salzberg S.L."/>
            <person name="Schwartz J.R."/>
            <person name="Shinn P."/>
            <person name="Southwick A.M."/>
            <person name="Sun H."/>
            <person name="Tallon L.J."/>
            <person name="Tambunga G."/>
            <person name="Toriumi M.J."/>
            <person name="Town C.D."/>
            <person name="Utterback T."/>
            <person name="Van Aken S."/>
            <person name="Vaysberg M."/>
            <person name="Vysotskaia V.S."/>
            <person name="Walker M."/>
            <person name="Wu D."/>
            <person name="Yu G."/>
            <person name="Fraser C.M."/>
            <person name="Venter J.C."/>
            <person name="Davis R.W."/>
        </authorList>
    </citation>
    <scope>NUCLEOTIDE SEQUENCE [LARGE SCALE GENOMIC DNA]</scope>
    <source>
        <strain>cv. Columbia</strain>
    </source>
</reference>
<reference key="2">
    <citation type="journal article" date="2017" name="Plant J.">
        <title>Araport11: a complete reannotation of the Arabidopsis thaliana reference genome.</title>
        <authorList>
            <person name="Cheng C.Y."/>
            <person name="Krishnakumar V."/>
            <person name="Chan A.P."/>
            <person name="Thibaud-Nissen F."/>
            <person name="Schobel S."/>
            <person name="Town C.D."/>
        </authorList>
    </citation>
    <scope>GENOME REANNOTATION</scope>
    <source>
        <strain>cv. Columbia</strain>
    </source>
</reference>
<reference key="3">
    <citation type="journal article" date="2003" name="Science">
        <title>Empirical analysis of transcriptional activity in the Arabidopsis genome.</title>
        <authorList>
            <person name="Yamada K."/>
            <person name="Lim J."/>
            <person name="Dale J.M."/>
            <person name="Chen H."/>
            <person name="Shinn P."/>
            <person name="Palm C.J."/>
            <person name="Southwick A.M."/>
            <person name="Wu H.C."/>
            <person name="Kim C.J."/>
            <person name="Nguyen M."/>
            <person name="Pham P.K."/>
            <person name="Cheuk R.F."/>
            <person name="Karlin-Newmann G."/>
            <person name="Liu S.X."/>
            <person name="Lam B."/>
            <person name="Sakano H."/>
            <person name="Wu T."/>
            <person name="Yu G."/>
            <person name="Miranda M."/>
            <person name="Quach H.L."/>
            <person name="Tripp M."/>
            <person name="Chang C.H."/>
            <person name="Lee J.M."/>
            <person name="Toriumi M.J."/>
            <person name="Chan M.M."/>
            <person name="Tang C.C."/>
            <person name="Onodera C.S."/>
            <person name="Deng J.M."/>
            <person name="Akiyama K."/>
            <person name="Ansari Y."/>
            <person name="Arakawa T."/>
            <person name="Banh J."/>
            <person name="Banno F."/>
            <person name="Bowser L."/>
            <person name="Brooks S.Y."/>
            <person name="Carninci P."/>
            <person name="Chao Q."/>
            <person name="Choy N."/>
            <person name="Enju A."/>
            <person name="Goldsmith A.D."/>
            <person name="Gurjal M."/>
            <person name="Hansen N.F."/>
            <person name="Hayashizaki Y."/>
            <person name="Johnson-Hopson C."/>
            <person name="Hsuan V.W."/>
            <person name="Iida K."/>
            <person name="Karnes M."/>
            <person name="Khan S."/>
            <person name="Koesema E."/>
            <person name="Ishida J."/>
            <person name="Jiang P.X."/>
            <person name="Jones T."/>
            <person name="Kawai J."/>
            <person name="Kamiya A."/>
            <person name="Meyers C."/>
            <person name="Nakajima M."/>
            <person name="Narusaka M."/>
            <person name="Seki M."/>
            <person name="Sakurai T."/>
            <person name="Satou M."/>
            <person name="Tamse R."/>
            <person name="Vaysberg M."/>
            <person name="Wallender E.K."/>
            <person name="Wong C."/>
            <person name="Yamamura Y."/>
            <person name="Yuan S."/>
            <person name="Shinozaki K."/>
            <person name="Davis R.W."/>
            <person name="Theologis A."/>
            <person name="Ecker J.R."/>
        </authorList>
    </citation>
    <scope>NUCLEOTIDE SEQUENCE [LARGE SCALE MRNA]</scope>
    <source>
        <strain>cv. Columbia</strain>
    </source>
</reference>
<comment type="catalytic activity">
    <reaction>
        <text>L-seryl-[protein] + ATP = O-phospho-L-seryl-[protein] + ADP + H(+)</text>
        <dbReference type="Rhea" id="RHEA:17989"/>
        <dbReference type="Rhea" id="RHEA-COMP:9863"/>
        <dbReference type="Rhea" id="RHEA-COMP:11604"/>
        <dbReference type="ChEBI" id="CHEBI:15378"/>
        <dbReference type="ChEBI" id="CHEBI:29999"/>
        <dbReference type="ChEBI" id="CHEBI:30616"/>
        <dbReference type="ChEBI" id="CHEBI:83421"/>
        <dbReference type="ChEBI" id="CHEBI:456216"/>
    </reaction>
</comment>
<comment type="catalytic activity">
    <reaction>
        <text>L-threonyl-[protein] + ATP = O-phospho-L-threonyl-[protein] + ADP + H(+)</text>
        <dbReference type="Rhea" id="RHEA:46608"/>
        <dbReference type="Rhea" id="RHEA-COMP:11060"/>
        <dbReference type="Rhea" id="RHEA-COMP:11605"/>
        <dbReference type="ChEBI" id="CHEBI:15378"/>
        <dbReference type="ChEBI" id="CHEBI:30013"/>
        <dbReference type="ChEBI" id="CHEBI:30616"/>
        <dbReference type="ChEBI" id="CHEBI:61977"/>
        <dbReference type="ChEBI" id="CHEBI:456216"/>
    </reaction>
</comment>
<comment type="similarity">
    <text evidence="1">Belongs to the protein kinase superfamily. Ser/Thr protein kinase family.</text>
</comment>
<comment type="sequence caution" evidence="4">
    <conflict type="erroneous gene model prediction">
        <sequence resource="EMBL-CDS" id="AAF88093"/>
    </conflict>
    <text>The predicted gene has been split into 2 genes: At1g12680 and At1g12700.</text>
</comment>
<dbReference type="EC" id="2.7.11.-"/>
<dbReference type="EMBL" id="AC025417">
    <property type="protein sequence ID" value="AAF88093.1"/>
    <property type="status" value="ALT_SEQ"/>
    <property type="molecule type" value="Genomic_DNA"/>
</dbReference>
<dbReference type="EMBL" id="CP002684">
    <property type="protein sequence ID" value="AEE28914.1"/>
    <property type="molecule type" value="Genomic_DNA"/>
</dbReference>
<dbReference type="EMBL" id="AY062754">
    <property type="protein sequence ID" value="AAL32832.1"/>
    <property type="molecule type" value="mRNA"/>
</dbReference>
<dbReference type="EMBL" id="BT006608">
    <property type="protein sequence ID" value="AAP31952.1"/>
    <property type="molecule type" value="mRNA"/>
</dbReference>
<dbReference type="PIR" id="D86260">
    <property type="entry name" value="D86260"/>
</dbReference>
<dbReference type="RefSeq" id="NP_172728.1">
    <property type="nucleotide sequence ID" value="NM_101138.4"/>
</dbReference>
<dbReference type="SMR" id="Q8W490"/>
<dbReference type="BioGRID" id="23064">
    <property type="interactions" value="5"/>
</dbReference>
<dbReference type="FunCoup" id="Q8W490">
    <property type="interactions" value="1129"/>
</dbReference>
<dbReference type="IntAct" id="Q8W490">
    <property type="interactions" value="6"/>
</dbReference>
<dbReference type="STRING" id="3702.Q8W490"/>
<dbReference type="iPTMnet" id="Q8W490"/>
<dbReference type="PaxDb" id="3702-AT1G12680.1"/>
<dbReference type="ProteomicsDB" id="236382"/>
<dbReference type="EnsemblPlants" id="AT1G12680.1">
    <property type="protein sequence ID" value="AT1G12680.1"/>
    <property type="gene ID" value="AT1G12680"/>
</dbReference>
<dbReference type="GeneID" id="837824"/>
<dbReference type="Gramene" id="AT1G12680.1">
    <property type="protein sequence ID" value="AT1G12680.1"/>
    <property type="gene ID" value="AT1G12680"/>
</dbReference>
<dbReference type="KEGG" id="ath:AT1G12680"/>
<dbReference type="Araport" id="AT1G12680"/>
<dbReference type="TAIR" id="AT1G12680">
    <property type="gene designation" value="PEPKR2"/>
</dbReference>
<dbReference type="eggNOG" id="KOG0032">
    <property type="taxonomic scope" value="Eukaryota"/>
</dbReference>
<dbReference type="HOGENOM" id="CLU_000288_63_0_1"/>
<dbReference type="InParanoid" id="Q8W490"/>
<dbReference type="OMA" id="CIESATQ"/>
<dbReference type="PhylomeDB" id="Q8W490"/>
<dbReference type="PRO" id="PR:Q8W490"/>
<dbReference type="Proteomes" id="UP000006548">
    <property type="component" value="Chromosome 1"/>
</dbReference>
<dbReference type="ExpressionAtlas" id="Q8W490">
    <property type="expression patterns" value="baseline and differential"/>
</dbReference>
<dbReference type="GO" id="GO:0005524">
    <property type="term" value="F:ATP binding"/>
    <property type="evidence" value="ECO:0007669"/>
    <property type="project" value="UniProtKB-KW"/>
</dbReference>
<dbReference type="GO" id="GO:0106310">
    <property type="term" value="F:protein serine kinase activity"/>
    <property type="evidence" value="ECO:0007669"/>
    <property type="project" value="RHEA"/>
</dbReference>
<dbReference type="GO" id="GO:0004674">
    <property type="term" value="F:protein serine/threonine kinase activity"/>
    <property type="evidence" value="ECO:0007669"/>
    <property type="project" value="UniProtKB-KW"/>
</dbReference>
<dbReference type="CDD" id="cd05117">
    <property type="entry name" value="STKc_CAMK"/>
    <property type="match status" value="1"/>
</dbReference>
<dbReference type="FunFam" id="3.30.200.20:FF:000042">
    <property type="entry name" value="Aurora kinase A"/>
    <property type="match status" value="1"/>
</dbReference>
<dbReference type="FunFam" id="1.10.510.10:FF:000641">
    <property type="entry name" value="Serine/threonine-protein kinase PEPKR2"/>
    <property type="match status" value="1"/>
</dbReference>
<dbReference type="Gene3D" id="1.10.510.10">
    <property type="entry name" value="Transferase(Phosphotransferase) domain 1"/>
    <property type="match status" value="1"/>
</dbReference>
<dbReference type="InterPro" id="IPR050205">
    <property type="entry name" value="CDPK_Ser/Thr_kinases"/>
</dbReference>
<dbReference type="InterPro" id="IPR011009">
    <property type="entry name" value="Kinase-like_dom_sf"/>
</dbReference>
<dbReference type="InterPro" id="IPR000719">
    <property type="entry name" value="Prot_kinase_dom"/>
</dbReference>
<dbReference type="InterPro" id="IPR017441">
    <property type="entry name" value="Protein_kinase_ATP_BS"/>
</dbReference>
<dbReference type="InterPro" id="IPR008271">
    <property type="entry name" value="Ser/Thr_kinase_AS"/>
</dbReference>
<dbReference type="PANTHER" id="PTHR24349">
    <property type="entry name" value="SERINE/THREONINE-PROTEIN KINASE"/>
    <property type="match status" value="1"/>
</dbReference>
<dbReference type="Pfam" id="PF00069">
    <property type="entry name" value="Pkinase"/>
    <property type="match status" value="1"/>
</dbReference>
<dbReference type="SMART" id="SM00220">
    <property type="entry name" value="S_TKc"/>
    <property type="match status" value="1"/>
</dbReference>
<dbReference type="SUPFAM" id="SSF56112">
    <property type="entry name" value="Protein kinase-like (PK-like)"/>
    <property type="match status" value="1"/>
</dbReference>
<dbReference type="PROSITE" id="PS00107">
    <property type="entry name" value="PROTEIN_KINASE_ATP"/>
    <property type="match status" value="1"/>
</dbReference>
<dbReference type="PROSITE" id="PS50011">
    <property type="entry name" value="PROTEIN_KINASE_DOM"/>
    <property type="match status" value="1"/>
</dbReference>
<dbReference type="PROSITE" id="PS00108">
    <property type="entry name" value="PROTEIN_KINASE_ST"/>
    <property type="match status" value="1"/>
</dbReference>
<feature type="chain" id="PRO_0000342696" description="Serine/threonine-protein kinase PEPKR2">
    <location>
        <begin position="1"/>
        <end position="470"/>
    </location>
</feature>
<feature type="domain" description="Protein kinase" evidence="1">
    <location>
        <begin position="107"/>
        <end position="355"/>
    </location>
</feature>
<feature type="region of interest" description="Disordered" evidence="3">
    <location>
        <begin position="377"/>
        <end position="419"/>
    </location>
</feature>
<feature type="region of interest" description="Disordered" evidence="3">
    <location>
        <begin position="441"/>
        <end position="464"/>
    </location>
</feature>
<feature type="compositionally biased region" description="Polar residues" evidence="3">
    <location>
        <begin position="377"/>
        <end position="386"/>
    </location>
</feature>
<feature type="compositionally biased region" description="Basic and acidic residues" evidence="3">
    <location>
        <begin position="387"/>
        <end position="403"/>
    </location>
</feature>
<feature type="compositionally biased region" description="Polar residues" evidence="3">
    <location>
        <begin position="445"/>
        <end position="464"/>
    </location>
</feature>
<feature type="active site" description="Proton acceptor" evidence="1 2">
    <location>
        <position position="224"/>
    </location>
</feature>
<feature type="binding site" evidence="1">
    <location>
        <begin position="113"/>
        <end position="121"/>
    </location>
    <ligand>
        <name>ATP</name>
        <dbReference type="ChEBI" id="CHEBI:30616"/>
    </ligand>
</feature>
<feature type="binding site" evidence="1">
    <location>
        <position position="136"/>
    </location>
    <ligand>
        <name>ATP</name>
        <dbReference type="ChEBI" id="CHEBI:30616"/>
    </ligand>
</feature>
<name>PEPK2_ARATH</name>
<proteinExistence type="evidence at transcript level"/>